<proteinExistence type="evidence at transcript level"/>
<comment type="subcellular location">
    <subcellularLocation>
        <location evidence="1">Cytoplasm</location>
        <location evidence="1">Cytosol</location>
    </subcellularLocation>
</comment>
<comment type="tissue specificity">
    <text evidence="4">Mostly expressed in glandular trichomes (lupulin glands) after flowering, and, to a lower extent, in stems, leaves, cones and flowers.</text>
</comment>
<comment type="developmental stage">
    <text evidence="4">Accumulates progressively in glandular trichomes (lupulin glands) after flowering.</text>
</comment>
<comment type="domain">
    <text evidence="2">Both substrate-binding domains (SBD1 and SBD2) are involved in the substrate recognition, and are sufficient to confer the substrate specificity.</text>
</comment>
<comment type="similarity">
    <text evidence="6">Belongs to the ATP-dependent AMP-binding enzyme family.</text>
</comment>
<feature type="chain" id="PRO_0000452951" description="Probable CoA ligase CCL6">
    <location>
        <begin position="1"/>
        <end position="658"/>
    </location>
</feature>
<feature type="region of interest" description="SBD1" evidence="2">
    <location>
        <begin position="298"/>
        <end position="411"/>
    </location>
</feature>
<feature type="region of interest" description="SBD2" evidence="2">
    <location>
        <begin position="412"/>
        <end position="477"/>
    </location>
</feature>
<feature type="binding site" evidence="3">
    <location>
        <begin position="226"/>
        <end position="234"/>
    </location>
    <ligand>
        <name>ATP</name>
        <dbReference type="ChEBI" id="CHEBI:30616"/>
    </ligand>
</feature>
<feature type="binding site" evidence="3">
    <location>
        <begin position="411"/>
        <end position="416"/>
    </location>
    <ligand>
        <name>ATP</name>
        <dbReference type="ChEBI" id="CHEBI:30616"/>
    </ligand>
</feature>
<feature type="binding site" evidence="3">
    <location>
        <position position="497"/>
    </location>
    <ligand>
        <name>ATP</name>
        <dbReference type="ChEBI" id="CHEBI:30616"/>
    </ligand>
</feature>
<feature type="binding site" evidence="3">
    <location>
        <begin position="509"/>
        <end position="512"/>
    </location>
    <ligand>
        <name>ATP</name>
        <dbReference type="ChEBI" id="CHEBI:30616"/>
    </ligand>
</feature>
<feature type="binding site" evidence="3">
    <location>
        <position position="632"/>
    </location>
    <ligand>
        <name>ATP</name>
        <dbReference type="ChEBI" id="CHEBI:30616"/>
    </ligand>
</feature>
<accession>M4ISH1</accession>
<evidence type="ECO:0000250" key="1">
    <source>
        <dbReference type="UniProtKB" id="M4IRL4"/>
    </source>
</evidence>
<evidence type="ECO:0000250" key="2">
    <source>
        <dbReference type="UniProtKB" id="Q42524"/>
    </source>
</evidence>
<evidence type="ECO:0000250" key="3">
    <source>
        <dbReference type="UniProtKB" id="Q81G39"/>
    </source>
</evidence>
<evidence type="ECO:0000269" key="4">
    <source>
    </source>
</evidence>
<evidence type="ECO:0000303" key="5">
    <source>
    </source>
</evidence>
<evidence type="ECO:0000305" key="6"/>
<evidence type="ECO:0000305" key="7">
    <source>
    </source>
</evidence>
<organism>
    <name type="scientific">Humulus lupulus</name>
    <name type="common">European hop</name>
    <dbReference type="NCBI Taxonomy" id="3486"/>
    <lineage>
        <taxon>Eukaryota</taxon>
        <taxon>Viridiplantae</taxon>
        <taxon>Streptophyta</taxon>
        <taxon>Embryophyta</taxon>
        <taxon>Tracheophyta</taxon>
        <taxon>Spermatophyta</taxon>
        <taxon>Magnoliopsida</taxon>
        <taxon>eudicotyledons</taxon>
        <taxon>Gunneridae</taxon>
        <taxon>Pentapetalae</taxon>
        <taxon>rosids</taxon>
        <taxon>fabids</taxon>
        <taxon>Rosales</taxon>
        <taxon>Cannabaceae</taxon>
        <taxon>Humulus</taxon>
    </lineage>
</organism>
<keyword id="KW-0067">ATP-binding</keyword>
<keyword id="KW-0963">Cytoplasm</keyword>
<keyword id="KW-0436">Ligase</keyword>
<keyword id="KW-0547">Nucleotide-binding</keyword>
<reference key="1">
    <citation type="journal article" date="2013" name="Mol. Plant">
        <title>Characterization of the formation of branched short-chain fatty acid:CoAs for bitter acid biosynthesis in hop glandular trichomes.</title>
        <authorList>
            <person name="Xu H."/>
            <person name="Zhang F."/>
            <person name="Liu B."/>
            <person name="Huhman D.V."/>
            <person name="Sumner L.W."/>
            <person name="Dixon R.A."/>
            <person name="Wang G."/>
        </authorList>
    </citation>
    <scope>NUCLEOTIDE SEQUENCE [MRNA]</scope>
    <scope>TISSUE SPECIFICITY</scope>
    <scope>DEVELOPMENTAL STAGE</scope>
    <scope>GENE FAMILY</scope>
    <scope>NOMENCLATURE</scope>
    <source>
        <strain>cv. Nugget</strain>
    </source>
</reference>
<protein>
    <recommendedName>
        <fullName evidence="7">Probable CoA ligase CCL6</fullName>
        <shortName evidence="5">HlCCL6</shortName>
        <ecNumber evidence="7">6.2.1.-</ecNumber>
    </recommendedName>
</protein>
<name>CCL6_HUMLU</name>
<gene>
    <name evidence="5" type="primary">CCL6</name>
</gene>
<sequence>MSYTVKVEEARPATEKMPSAGPVYRSIYARDGLLELPEGLQSPWEFLSGSVKRSPKTPMLGRRQIKDSEAGPYVWLTYQEVHDEAIRMASAMRSRGVNPGDRCGIYGTNCPQWIVAMQACYSHAITYVPLYDTLGPNAVEFIINHGEVSIAFVQENKISAILSCLPNCSSLLKTIVSFGNITSVQKKETEALGVSCFSWEEFSQLGNLSGELPEKHRTDICTLMYTSGATGEPKGVILTNEAIMAEILSTDNMLELTDKVFSEEDVYFSYLPLAHVYDQIVENYCIYKGSAIGYWRGDIRFLMDDLQELKPTIFCGVPRVYDRIYAGIFHKVSSGGTLKKMLFQYAYNYKMANMEKGLPHGQAAPLMDKLFFDKIKQGFGGRIRLMFSGAAPLPHHVEEYLRVTSCAALSQGYGLTESCGGCLTSIANIFPMIGTVGVPMTTIEARLESVPEMGYDALSDKPRGEICLRGTTLFSGYHKREDLTKDVLVDGWFHTGDIGEWQPNGAMKIIDRKKNIFKLSQGEYVPVENIEGIYLQCPLIASIWVYGNSFESFLVAVVVPERLALENWAANRNLTDDFKSLCENPKASKYILDELNSTAKKHQLRGFEMLKAVYLEPNPFDMERDLITPTFKLKRPQLLKYYKDHVDKLYSEAKEARV</sequence>
<dbReference type="EC" id="6.2.1.-" evidence="7"/>
<dbReference type="EMBL" id="JQ740208">
    <property type="protein sequence ID" value="AGA17923.1"/>
    <property type="molecule type" value="mRNA"/>
</dbReference>
<dbReference type="SMR" id="M4ISH1"/>
<dbReference type="GO" id="GO:0005829">
    <property type="term" value="C:cytosol"/>
    <property type="evidence" value="ECO:0000250"/>
    <property type="project" value="UniProtKB"/>
</dbReference>
<dbReference type="GO" id="GO:0005783">
    <property type="term" value="C:endoplasmic reticulum"/>
    <property type="evidence" value="ECO:0007669"/>
    <property type="project" value="TreeGrafter"/>
</dbReference>
<dbReference type="GO" id="GO:0016020">
    <property type="term" value="C:membrane"/>
    <property type="evidence" value="ECO:0007669"/>
    <property type="project" value="TreeGrafter"/>
</dbReference>
<dbReference type="GO" id="GO:0005524">
    <property type="term" value="F:ATP binding"/>
    <property type="evidence" value="ECO:0007669"/>
    <property type="project" value="UniProtKB-KW"/>
</dbReference>
<dbReference type="GO" id="GO:0016405">
    <property type="term" value="F:CoA-ligase activity"/>
    <property type="evidence" value="ECO:0000250"/>
    <property type="project" value="UniProtKB"/>
</dbReference>
<dbReference type="GO" id="GO:0004467">
    <property type="term" value="F:long-chain fatty acid-CoA ligase activity"/>
    <property type="evidence" value="ECO:0007669"/>
    <property type="project" value="InterPro"/>
</dbReference>
<dbReference type="GO" id="GO:0010143">
    <property type="term" value="P:cutin biosynthetic process"/>
    <property type="evidence" value="ECO:0007669"/>
    <property type="project" value="TreeGrafter"/>
</dbReference>
<dbReference type="GO" id="GO:0010025">
    <property type="term" value="P:wax biosynthetic process"/>
    <property type="evidence" value="ECO:0007669"/>
    <property type="project" value="TreeGrafter"/>
</dbReference>
<dbReference type="CDD" id="cd05927">
    <property type="entry name" value="LC-FACS_euk"/>
    <property type="match status" value="1"/>
</dbReference>
<dbReference type="Gene3D" id="3.40.50.12780">
    <property type="entry name" value="N-terminal domain of ligase-like"/>
    <property type="match status" value="1"/>
</dbReference>
<dbReference type="InterPro" id="IPR000873">
    <property type="entry name" value="AMP-dep_synth/lig_dom"/>
</dbReference>
<dbReference type="InterPro" id="IPR042099">
    <property type="entry name" value="ANL_N_sf"/>
</dbReference>
<dbReference type="InterPro" id="IPR045311">
    <property type="entry name" value="LC-FACS_euk"/>
</dbReference>
<dbReference type="PANTHER" id="PTHR43272:SF4">
    <property type="entry name" value="LONG CHAIN ACYL-COA SYNTHETASE 2"/>
    <property type="match status" value="1"/>
</dbReference>
<dbReference type="PANTHER" id="PTHR43272">
    <property type="entry name" value="LONG-CHAIN-FATTY-ACID--COA LIGASE"/>
    <property type="match status" value="1"/>
</dbReference>
<dbReference type="Pfam" id="PF00501">
    <property type="entry name" value="AMP-binding"/>
    <property type="match status" value="1"/>
</dbReference>
<dbReference type="SUPFAM" id="SSF56801">
    <property type="entry name" value="Acetyl-CoA synthetase-like"/>
    <property type="match status" value="1"/>
</dbReference>